<accession>Q68WV8</accession>
<feature type="chain" id="PRO_0000152076" description="Leucine--tRNA ligase">
    <location>
        <begin position="1"/>
        <end position="828"/>
    </location>
</feature>
<feature type="short sequence motif" description="'HIGH' region">
    <location>
        <begin position="36"/>
        <end position="46"/>
    </location>
</feature>
<feature type="short sequence motif" description="'KMSKS' region">
    <location>
        <begin position="595"/>
        <end position="599"/>
    </location>
</feature>
<feature type="binding site" evidence="1">
    <location>
        <position position="598"/>
    </location>
    <ligand>
        <name>ATP</name>
        <dbReference type="ChEBI" id="CHEBI:30616"/>
    </ligand>
</feature>
<evidence type="ECO:0000255" key="1">
    <source>
        <dbReference type="HAMAP-Rule" id="MF_00049"/>
    </source>
</evidence>
<name>SYL_RICTY</name>
<dbReference type="EC" id="6.1.1.4" evidence="1"/>
<dbReference type="EMBL" id="AE017197">
    <property type="protein sequence ID" value="AAU03884.1"/>
    <property type="molecule type" value="Genomic_DNA"/>
</dbReference>
<dbReference type="RefSeq" id="WP_011190868.1">
    <property type="nucleotide sequence ID" value="NC_006142.1"/>
</dbReference>
<dbReference type="SMR" id="Q68WV8"/>
<dbReference type="KEGG" id="rty:RT0407"/>
<dbReference type="eggNOG" id="COG0495">
    <property type="taxonomic scope" value="Bacteria"/>
</dbReference>
<dbReference type="HOGENOM" id="CLU_004427_0_0_5"/>
<dbReference type="OrthoDB" id="9810365at2"/>
<dbReference type="Proteomes" id="UP000000604">
    <property type="component" value="Chromosome"/>
</dbReference>
<dbReference type="GO" id="GO:0005737">
    <property type="term" value="C:cytoplasm"/>
    <property type="evidence" value="ECO:0007669"/>
    <property type="project" value="UniProtKB-SubCell"/>
</dbReference>
<dbReference type="GO" id="GO:0002161">
    <property type="term" value="F:aminoacyl-tRNA deacylase activity"/>
    <property type="evidence" value="ECO:0007669"/>
    <property type="project" value="InterPro"/>
</dbReference>
<dbReference type="GO" id="GO:0005524">
    <property type="term" value="F:ATP binding"/>
    <property type="evidence" value="ECO:0007669"/>
    <property type="project" value="UniProtKB-UniRule"/>
</dbReference>
<dbReference type="GO" id="GO:0004823">
    <property type="term" value="F:leucine-tRNA ligase activity"/>
    <property type="evidence" value="ECO:0007669"/>
    <property type="project" value="UniProtKB-UniRule"/>
</dbReference>
<dbReference type="GO" id="GO:0006429">
    <property type="term" value="P:leucyl-tRNA aminoacylation"/>
    <property type="evidence" value="ECO:0007669"/>
    <property type="project" value="UniProtKB-UniRule"/>
</dbReference>
<dbReference type="CDD" id="cd07958">
    <property type="entry name" value="Anticodon_Ia_Leu_BEm"/>
    <property type="match status" value="1"/>
</dbReference>
<dbReference type="CDD" id="cd00812">
    <property type="entry name" value="LeuRS_core"/>
    <property type="match status" value="1"/>
</dbReference>
<dbReference type="FunFam" id="1.10.730.10:FF:000002">
    <property type="entry name" value="Leucine--tRNA ligase"/>
    <property type="match status" value="1"/>
</dbReference>
<dbReference type="FunFam" id="3.40.50.620:FF:000003">
    <property type="entry name" value="Leucine--tRNA ligase"/>
    <property type="match status" value="1"/>
</dbReference>
<dbReference type="FunFam" id="3.40.50.620:FF:000051">
    <property type="entry name" value="Leucine--tRNA ligase"/>
    <property type="match status" value="1"/>
</dbReference>
<dbReference type="Gene3D" id="2.20.28.290">
    <property type="match status" value="1"/>
</dbReference>
<dbReference type="Gene3D" id="3.10.20.590">
    <property type="match status" value="1"/>
</dbReference>
<dbReference type="Gene3D" id="3.40.50.620">
    <property type="entry name" value="HUPs"/>
    <property type="match status" value="2"/>
</dbReference>
<dbReference type="Gene3D" id="1.10.730.10">
    <property type="entry name" value="Isoleucyl-tRNA Synthetase, Domain 1"/>
    <property type="match status" value="2"/>
</dbReference>
<dbReference type="HAMAP" id="MF_00049_B">
    <property type="entry name" value="Leu_tRNA_synth_B"/>
    <property type="match status" value="1"/>
</dbReference>
<dbReference type="InterPro" id="IPR001412">
    <property type="entry name" value="aa-tRNA-synth_I_CS"/>
</dbReference>
<dbReference type="InterPro" id="IPR002300">
    <property type="entry name" value="aa-tRNA-synth_Ia"/>
</dbReference>
<dbReference type="InterPro" id="IPR002302">
    <property type="entry name" value="Leu-tRNA-ligase"/>
</dbReference>
<dbReference type="InterPro" id="IPR025709">
    <property type="entry name" value="Leu_tRNA-synth_edit"/>
</dbReference>
<dbReference type="InterPro" id="IPR013155">
    <property type="entry name" value="M/V/L/I-tRNA-synth_anticd-bd"/>
</dbReference>
<dbReference type="InterPro" id="IPR015413">
    <property type="entry name" value="Methionyl/Leucyl_tRNA_Synth"/>
</dbReference>
<dbReference type="InterPro" id="IPR014729">
    <property type="entry name" value="Rossmann-like_a/b/a_fold"/>
</dbReference>
<dbReference type="InterPro" id="IPR009080">
    <property type="entry name" value="tRNAsynth_Ia_anticodon-bd"/>
</dbReference>
<dbReference type="InterPro" id="IPR009008">
    <property type="entry name" value="Val/Leu/Ile-tRNA-synth_edit"/>
</dbReference>
<dbReference type="NCBIfam" id="TIGR00396">
    <property type="entry name" value="leuS_bact"/>
    <property type="match status" value="1"/>
</dbReference>
<dbReference type="PANTHER" id="PTHR43740:SF2">
    <property type="entry name" value="LEUCINE--TRNA LIGASE, MITOCHONDRIAL"/>
    <property type="match status" value="1"/>
</dbReference>
<dbReference type="PANTHER" id="PTHR43740">
    <property type="entry name" value="LEUCYL-TRNA SYNTHETASE"/>
    <property type="match status" value="1"/>
</dbReference>
<dbReference type="Pfam" id="PF08264">
    <property type="entry name" value="Anticodon_1"/>
    <property type="match status" value="1"/>
</dbReference>
<dbReference type="Pfam" id="PF00133">
    <property type="entry name" value="tRNA-synt_1"/>
    <property type="match status" value="2"/>
</dbReference>
<dbReference type="Pfam" id="PF13603">
    <property type="entry name" value="tRNA-synt_1_2"/>
    <property type="match status" value="1"/>
</dbReference>
<dbReference type="Pfam" id="PF09334">
    <property type="entry name" value="tRNA-synt_1g"/>
    <property type="match status" value="1"/>
</dbReference>
<dbReference type="PRINTS" id="PR00985">
    <property type="entry name" value="TRNASYNTHLEU"/>
</dbReference>
<dbReference type="SUPFAM" id="SSF47323">
    <property type="entry name" value="Anticodon-binding domain of a subclass of class I aminoacyl-tRNA synthetases"/>
    <property type="match status" value="1"/>
</dbReference>
<dbReference type="SUPFAM" id="SSF52374">
    <property type="entry name" value="Nucleotidylyl transferase"/>
    <property type="match status" value="1"/>
</dbReference>
<dbReference type="SUPFAM" id="SSF50677">
    <property type="entry name" value="ValRS/IleRS/LeuRS editing domain"/>
    <property type="match status" value="1"/>
</dbReference>
<dbReference type="PROSITE" id="PS00178">
    <property type="entry name" value="AA_TRNA_LIGASE_I"/>
    <property type="match status" value="1"/>
</dbReference>
<protein>
    <recommendedName>
        <fullName evidence="1">Leucine--tRNA ligase</fullName>
        <ecNumber evidence="1">6.1.1.4</ecNumber>
    </recommendedName>
    <alternativeName>
        <fullName evidence="1">Leucyl-tRNA synthetase</fullName>
        <shortName evidence="1">LeuRS</shortName>
    </alternativeName>
</protein>
<proteinExistence type="inferred from homology"/>
<keyword id="KW-0030">Aminoacyl-tRNA synthetase</keyword>
<keyword id="KW-0067">ATP-binding</keyword>
<keyword id="KW-0963">Cytoplasm</keyword>
<keyword id="KW-0436">Ligase</keyword>
<keyword id="KW-0547">Nucleotide-binding</keyword>
<keyword id="KW-0648">Protein biosynthesis</keyword>
<gene>
    <name evidence="1" type="primary">leuS</name>
    <name type="ordered locus">RT0407</name>
</gene>
<comment type="catalytic activity">
    <reaction evidence="1">
        <text>tRNA(Leu) + L-leucine + ATP = L-leucyl-tRNA(Leu) + AMP + diphosphate</text>
        <dbReference type="Rhea" id="RHEA:11688"/>
        <dbReference type="Rhea" id="RHEA-COMP:9613"/>
        <dbReference type="Rhea" id="RHEA-COMP:9622"/>
        <dbReference type="ChEBI" id="CHEBI:30616"/>
        <dbReference type="ChEBI" id="CHEBI:33019"/>
        <dbReference type="ChEBI" id="CHEBI:57427"/>
        <dbReference type="ChEBI" id="CHEBI:78442"/>
        <dbReference type="ChEBI" id="CHEBI:78494"/>
        <dbReference type="ChEBI" id="CHEBI:456215"/>
        <dbReference type="EC" id="6.1.1.4"/>
    </reaction>
</comment>
<comment type="subcellular location">
    <subcellularLocation>
        <location evidence="1">Cytoplasm</location>
    </subcellularLocation>
</comment>
<comment type="similarity">
    <text evidence="1">Belongs to the class-I aminoacyl-tRNA synthetase family.</text>
</comment>
<reference key="1">
    <citation type="journal article" date="2004" name="J. Bacteriol.">
        <title>Complete genome sequence of Rickettsia typhi and comparison with sequences of other Rickettsiae.</title>
        <authorList>
            <person name="McLeod M.P."/>
            <person name="Qin X."/>
            <person name="Karpathy S.E."/>
            <person name="Gioia J."/>
            <person name="Highlander S.K."/>
            <person name="Fox G.E."/>
            <person name="McNeill T.Z."/>
            <person name="Jiang H."/>
            <person name="Muzny D."/>
            <person name="Jacob L.S."/>
            <person name="Hawes A.C."/>
            <person name="Sodergren E."/>
            <person name="Gill R."/>
            <person name="Hume J."/>
            <person name="Morgan M."/>
            <person name="Fan G."/>
            <person name="Amin A.G."/>
            <person name="Gibbs R.A."/>
            <person name="Hong C."/>
            <person name="Yu X.-J."/>
            <person name="Walker D.H."/>
            <person name="Weinstock G.M."/>
        </authorList>
    </citation>
    <scope>NUCLEOTIDE SEQUENCE [LARGE SCALE GENOMIC DNA]</scope>
    <source>
        <strain>ATCC VR-144 / Wilmington</strain>
    </source>
</reference>
<sequence length="828" mass="96495">MHKIEQKWQKIWKEEKAFQVSNDSSKPKYYVLEMLPYPSGKIHIGHIRNYSIGDVIARFMTMQGFNVLHPMGWDAFGLPAENAAIQNNSRPQDWTYSNIEYMKKQLQSMGFSYDWTREINSCDPQYYKHEQKFFLELYDRDLVYQKESLVNWDPVDNTVLANEQVVNGRGWRSGAIIEKRYLNQWFLKITNYAEELLNEIQNLKDWPEAVRVMQEEWIGKSTGVNFHFKIKYHENSTIEVFSTKPETIFGASFIGIAFNHPIIEQLIFKTDEIANFITKCSYITKSSELEKSEKEGVFTGLYVIHPFDANIILPVIITNFVLMDYGTGAIFGCPAHDKRDHELAMKMNLPIKKVIGTDNTQEEVLINSDWLNGLTSSEAKQKVISKFETLGIGKRSVNYRLKDWGISRQRFWGCPIPIIYCETCGIVPVPYKDLPVTLPDDVSFDNNYNPLEHHPSWKHVNCPKCDNHAIRETDTFDTFFESSWYFTRYCNNNAVEMTDSKACNYWLPVDKYIGGIEHAVMHLLYARFFTKLMNEHHYVSIREPFKGLFTQGMVLHATYKDENNNWLYPAEVVKNGNEFFHKETNTRVVQGRIEKMSKSKKNIIDLETIQEQYSADAIRLFVLSDSPPEKDLQWSASGIEGCSRFIHKLDNMFEVISSLKDDMNNEINTELNRLIHFTIKHVADDIKTFSLNRAIARMRTLTNAIYCEISKDKIDVRTIKYGFNVLIQLLNPFIPHITEEIWQKLGNKERLYKSVFAEFDDSMLEFSTYIMAVQVNGKLRDTYEFNTDISEDEVKQITVNLPKIQKFLAGKEPNKIILVPRKIVNIII</sequence>
<organism>
    <name type="scientific">Rickettsia typhi (strain ATCC VR-144 / Wilmington)</name>
    <dbReference type="NCBI Taxonomy" id="257363"/>
    <lineage>
        <taxon>Bacteria</taxon>
        <taxon>Pseudomonadati</taxon>
        <taxon>Pseudomonadota</taxon>
        <taxon>Alphaproteobacteria</taxon>
        <taxon>Rickettsiales</taxon>
        <taxon>Rickettsiaceae</taxon>
        <taxon>Rickettsieae</taxon>
        <taxon>Rickettsia</taxon>
        <taxon>typhus group</taxon>
    </lineage>
</organism>